<protein>
    <recommendedName>
        <fullName>NADH-ubiquinone oxidoreductase chain 1</fullName>
        <ecNumber>7.1.1.2</ecNumber>
    </recommendedName>
    <alternativeName>
        <fullName>NADH dehydrogenase subunit 1</fullName>
    </alternativeName>
</protein>
<proteinExistence type="inferred from homology"/>
<reference key="1">
    <citation type="journal article" date="1999" name="Gene">
        <title>The complete mitochondrial DNA sequence of the Atlantic salmon, Salmo salar.</title>
        <authorList>
            <person name="Hurst C.D."/>
            <person name="Bartlett S.E."/>
            <person name="Davidson W.S."/>
            <person name="Bruce I.J."/>
        </authorList>
    </citation>
    <scope>NUCLEOTIDE SEQUENCE [GENOMIC DNA]</scope>
    <source>
        <tissue>Liver</tissue>
    </source>
</reference>
<reference key="2">
    <citation type="submission" date="1999-03" db="EMBL/GenBank/DDBJ databases">
        <title>The complete mitochondrial genome sequence of a teleost, Salmo salar, and comparisons with other salmoniformes.</title>
        <authorList>
            <person name="Arnason U."/>
            <person name="Johnsson E."/>
            <person name="Rasmussen A.S."/>
        </authorList>
    </citation>
    <scope>NUCLEOTIDE SEQUENCE [GENOMIC DNA]</scope>
</reference>
<gene>
    <name type="primary">MT-ND1</name>
    <name type="synonym">MTND1</name>
    <name type="synonym">NADH1</name>
    <name type="synonym">ND1</name>
</gene>
<sequence>MTTTLITHIINPLAYIVPVLLAVAFLTLLERKVLGYMQLRKGPNIVGPYGLLQPIADGLKLFIKEPVRPSTSSPFLFLATPMLALTLALTLWAPMPIPYPITDLNLGVLFVLALSSLAVYSILGSGWASNSKYALIGALRAVAQTISYEVSLGLILLSVIIFTGGFTLQTFNVAQESIWLLVPAWPLAAMWYISTLAETNRAPFDLTEGESELVSGFNVEYAGGPFALFFLAEYANILLMNTLSAILFLGASHIPAFPELTAVNLMTKAALLSVVFLWVRASYPRFRYDQLMHLVWKSFLPLTLALVLWHLALPTAMAGLPPQL</sequence>
<keyword id="KW-0249">Electron transport</keyword>
<keyword id="KW-0472">Membrane</keyword>
<keyword id="KW-0496">Mitochondrion</keyword>
<keyword id="KW-0999">Mitochondrion inner membrane</keyword>
<keyword id="KW-0520">NAD</keyword>
<keyword id="KW-1185">Reference proteome</keyword>
<keyword id="KW-0679">Respiratory chain</keyword>
<keyword id="KW-1278">Translocase</keyword>
<keyword id="KW-0812">Transmembrane</keyword>
<keyword id="KW-1133">Transmembrane helix</keyword>
<keyword id="KW-0813">Transport</keyword>
<keyword id="KW-0830">Ubiquinone</keyword>
<evidence type="ECO:0000250" key="1"/>
<evidence type="ECO:0000255" key="2"/>
<evidence type="ECO:0000305" key="3"/>
<name>NU1M_SALSA</name>
<dbReference type="EC" id="7.1.1.2"/>
<dbReference type="EMBL" id="U12143">
    <property type="protein sequence ID" value="AAD04733.1"/>
    <property type="molecule type" value="Genomic_DNA"/>
</dbReference>
<dbReference type="EMBL" id="AF133701">
    <property type="protein sequence ID" value="AAF61378.1"/>
    <property type="molecule type" value="Genomic_DNA"/>
</dbReference>
<dbReference type="PIR" id="T09947">
    <property type="entry name" value="T09947"/>
</dbReference>
<dbReference type="RefSeq" id="NP_008445.1">
    <property type="nucleotide sequence ID" value="NC_001960.1"/>
</dbReference>
<dbReference type="SMR" id="Q37676"/>
<dbReference type="STRING" id="8030.ENSSSAP00000000002"/>
<dbReference type="PaxDb" id="8030-ENSSSAP00000000002"/>
<dbReference type="GeneID" id="808311"/>
<dbReference type="KEGG" id="sasa:808311"/>
<dbReference type="CTD" id="4535"/>
<dbReference type="Proteomes" id="UP000087266">
    <property type="component" value="Mitochondrion MT"/>
</dbReference>
<dbReference type="Bgee" id="ENSSSAG00000000007">
    <property type="expression patterns" value="Expressed in mesonephros and 25 other cell types or tissues"/>
</dbReference>
<dbReference type="GO" id="GO:0005743">
    <property type="term" value="C:mitochondrial inner membrane"/>
    <property type="evidence" value="ECO:0007669"/>
    <property type="project" value="UniProtKB-SubCell"/>
</dbReference>
<dbReference type="GO" id="GO:0008137">
    <property type="term" value="F:NADH dehydrogenase (ubiquinone) activity"/>
    <property type="evidence" value="ECO:0007669"/>
    <property type="project" value="UniProtKB-EC"/>
</dbReference>
<dbReference type="GO" id="GO:0009060">
    <property type="term" value="P:aerobic respiration"/>
    <property type="evidence" value="ECO:0007669"/>
    <property type="project" value="TreeGrafter"/>
</dbReference>
<dbReference type="HAMAP" id="MF_01350">
    <property type="entry name" value="NDH1_NuoH"/>
    <property type="match status" value="1"/>
</dbReference>
<dbReference type="InterPro" id="IPR001694">
    <property type="entry name" value="NADH_UbQ_OxRdtase_su1/FPO"/>
</dbReference>
<dbReference type="InterPro" id="IPR018086">
    <property type="entry name" value="NADH_UbQ_OxRdtase_su1_CS"/>
</dbReference>
<dbReference type="PANTHER" id="PTHR11432">
    <property type="entry name" value="NADH DEHYDROGENASE SUBUNIT 1"/>
    <property type="match status" value="1"/>
</dbReference>
<dbReference type="PANTHER" id="PTHR11432:SF3">
    <property type="entry name" value="NADH-UBIQUINONE OXIDOREDUCTASE CHAIN 1"/>
    <property type="match status" value="1"/>
</dbReference>
<dbReference type="Pfam" id="PF00146">
    <property type="entry name" value="NADHdh"/>
    <property type="match status" value="1"/>
</dbReference>
<dbReference type="PROSITE" id="PS00667">
    <property type="entry name" value="COMPLEX1_ND1_1"/>
    <property type="match status" value="1"/>
</dbReference>
<dbReference type="PROSITE" id="PS00668">
    <property type="entry name" value="COMPLEX1_ND1_2"/>
    <property type="match status" value="1"/>
</dbReference>
<organism>
    <name type="scientific">Salmo salar</name>
    <name type="common">Atlantic salmon</name>
    <dbReference type="NCBI Taxonomy" id="8030"/>
    <lineage>
        <taxon>Eukaryota</taxon>
        <taxon>Metazoa</taxon>
        <taxon>Chordata</taxon>
        <taxon>Craniata</taxon>
        <taxon>Vertebrata</taxon>
        <taxon>Euteleostomi</taxon>
        <taxon>Actinopterygii</taxon>
        <taxon>Neopterygii</taxon>
        <taxon>Teleostei</taxon>
        <taxon>Protacanthopterygii</taxon>
        <taxon>Salmoniformes</taxon>
        <taxon>Salmonidae</taxon>
        <taxon>Salmoninae</taxon>
        <taxon>Salmo</taxon>
    </lineage>
</organism>
<geneLocation type="mitochondrion"/>
<feature type="chain" id="PRO_0000117473" description="NADH-ubiquinone oxidoreductase chain 1">
    <location>
        <begin position="1"/>
        <end position="324"/>
    </location>
</feature>
<feature type="transmembrane region" description="Helical" evidence="2">
    <location>
        <begin position="9"/>
        <end position="29"/>
    </location>
</feature>
<feature type="transmembrane region" description="Helical" evidence="2">
    <location>
        <begin position="43"/>
        <end position="63"/>
    </location>
</feature>
<feature type="transmembrane region" description="Helical" evidence="2">
    <location>
        <begin position="75"/>
        <end position="95"/>
    </location>
</feature>
<feature type="transmembrane region" description="Helical" evidence="2">
    <location>
        <begin position="106"/>
        <end position="126"/>
    </location>
</feature>
<feature type="transmembrane region" description="Helical" evidence="2">
    <location>
        <begin position="146"/>
        <end position="166"/>
    </location>
</feature>
<feature type="transmembrane region" description="Helical" evidence="2">
    <location>
        <begin position="177"/>
        <end position="197"/>
    </location>
</feature>
<feature type="transmembrane region" description="Helical" evidence="2">
    <location>
        <begin position="237"/>
        <end position="257"/>
    </location>
</feature>
<feature type="transmembrane region" description="Helical" evidence="2">
    <location>
        <begin position="259"/>
        <end position="279"/>
    </location>
</feature>
<feature type="transmembrane region" description="Helical" evidence="2">
    <location>
        <begin position="299"/>
        <end position="319"/>
    </location>
</feature>
<accession>Q37676</accession>
<comment type="function">
    <text evidence="1">Core subunit of the mitochondrial membrane respiratory chain NADH dehydrogenase (Complex I) that is believed to belong to the minimal assembly required for catalysis. Complex I functions in the transfer of electrons from NADH to the respiratory chain. The immediate electron acceptor for the enzyme is believed to be ubiquinone (By similarity).</text>
</comment>
<comment type="catalytic activity">
    <reaction>
        <text>a ubiquinone + NADH + 5 H(+)(in) = a ubiquinol + NAD(+) + 4 H(+)(out)</text>
        <dbReference type="Rhea" id="RHEA:29091"/>
        <dbReference type="Rhea" id="RHEA-COMP:9565"/>
        <dbReference type="Rhea" id="RHEA-COMP:9566"/>
        <dbReference type="ChEBI" id="CHEBI:15378"/>
        <dbReference type="ChEBI" id="CHEBI:16389"/>
        <dbReference type="ChEBI" id="CHEBI:17976"/>
        <dbReference type="ChEBI" id="CHEBI:57540"/>
        <dbReference type="ChEBI" id="CHEBI:57945"/>
        <dbReference type="EC" id="7.1.1.2"/>
    </reaction>
</comment>
<comment type="subcellular location">
    <subcellularLocation>
        <location evidence="1">Mitochondrion inner membrane</location>
        <topology evidence="1">Multi-pass membrane protein</topology>
    </subcellularLocation>
</comment>
<comment type="similarity">
    <text evidence="3">Belongs to the complex I subunit 1 family.</text>
</comment>